<accession>Q9KF78</accession>
<feature type="chain" id="PRO_0000140092" description="Putative GMP synthase [glutamine-hydrolyzing]">
    <location>
        <begin position="1"/>
        <end position="513"/>
    </location>
</feature>
<feature type="domain" description="Glutamine amidotransferase type-1">
    <location>
        <begin position="8"/>
        <end position="198"/>
    </location>
</feature>
<feature type="domain" description="GMPS ATP-PPase">
    <location>
        <begin position="199"/>
        <end position="388"/>
    </location>
</feature>
<feature type="active site" description="Nucleophile" evidence="1">
    <location>
        <position position="85"/>
    </location>
</feature>
<feature type="active site" evidence="1">
    <location>
        <position position="174"/>
    </location>
</feature>
<feature type="binding site" evidence="1">
    <location>
        <begin position="226"/>
        <end position="232"/>
    </location>
    <ligand>
        <name>ATP</name>
        <dbReference type="ChEBI" id="CHEBI:30616"/>
    </ligand>
</feature>
<sequence>MEQLSEEMIVVLDFGGQYNQLITRRIRDLGVYSELHPNTITAEQLKEMKPKGIIFSGGPNSAYAEGAPKCDPAIFDLGVPILGICYGMQLMTQHFGGKVDAAEHREYGKATITVENQSKLFQGLPVEQTVWMSHGDLIVAPPEGFVVDAQNPSCPVAAMSDEARNYYGVQFQPEVRHSQFGDDMLKNFAFAVCGCEGNWSMENFIELEMEKIREQVGDKQVLCALSGGVDSSVVAVLIHKAIGDQLTCMFIDHGLLRKGEADSVMKTFSEGFNMNVIKIDAKDRFLSKLEGVSDPEQKRKIIGNEFIYVFEEEASKLKDMDFLAQGTLYTDIIESGTATAQTIKSHHNVGGLPEDMRFELIEPLNTLFKDEVRKLGTELGIPDEVVWRQPFPGPGLGIRVLGEITEEKLEIVRESDAILREEIKKAGLDREIWQYFTALPNMRSVGVMGDARTYDYTVGIRAVTSIDGMTSDWARIPWDVLEIISTRIVNEVKHVNRVVYDITSKPPATIEWE</sequence>
<name>GUAA_HALH5</name>
<keyword id="KW-0067">ATP-binding</keyword>
<keyword id="KW-0315">Glutamine amidotransferase</keyword>
<keyword id="KW-0332">GMP biosynthesis</keyword>
<keyword id="KW-0436">Ligase</keyword>
<keyword id="KW-0547">Nucleotide-binding</keyword>
<keyword id="KW-0658">Purine biosynthesis</keyword>
<keyword id="KW-1185">Reference proteome</keyword>
<reference key="1">
    <citation type="journal article" date="2000" name="Nucleic Acids Res.">
        <title>Complete genome sequence of the alkaliphilic bacterium Bacillus halodurans and genomic sequence comparison with Bacillus subtilis.</title>
        <authorList>
            <person name="Takami H."/>
            <person name="Nakasone K."/>
            <person name="Takaki Y."/>
            <person name="Maeno G."/>
            <person name="Sasaki R."/>
            <person name="Masui N."/>
            <person name="Fuji F."/>
            <person name="Hirama C."/>
            <person name="Nakamura Y."/>
            <person name="Ogasawara N."/>
            <person name="Kuhara S."/>
            <person name="Horikoshi K."/>
        </authorList>
    </citation>
    <scope>NUCLEOTIDE SEQUENCE [LARGE SCALE GENOMIC DNA]</scope>
    <source>
        <strain>ATCC BAA-125 / DSM 18197 / FERM 7344 / JCM 9153 / C-125</strain>
    </source>
</reference>
<comment type="function">
    <text evidence="1">Catalyzes the synthesis of GMP from XMP.</text>
</comment>
<comment type="catalytic activity">
    <reaction>
        <text>XMP + L-glutamine + ATP + H2O = GMP + L-glutamate + AMP + diphosphate + 2 H(+)</text>
        <dbReference type="Rhea" id="RHEA:11680"/>
        <dbReference type="ChEBI" id="CHEBI:15377"/>
        <dbReference type="ChEBI" id="CHEBI:15378"/>
        <dbReference type="ChEBI" id="CHEBI:29985"/>
        <dbReference type="ChEBI" id="CHEBI:30616"/>
        <dbReference type="ChEBI" id="CHEBI:33019"/>
        <dbReference type="ChEBI" id="CHEBI:57464"/>
        <dbReference type="ChEBI" id="CHEBI:58115"/>
        <dbReference type="ChEBI" id="CHEBI:58359"/>
        <dbReference type="ChEBI" id="CHEBI:456215"/>
        <dbReference type="EC" id="6.3.5.2"/>
    </reaction>
</comment>
<comment type="pathway">
    <text>Purine metabolism; GMP biosynthesis; GMP from XMP (L-Gln route): step 1/1.</text>
</comment>
<comment type="subunit">
    <text evidence="1">Homodimer.</text>
</comment>
<comment type="caution">
    <text evidence="2">Gln-172 is present instead of the conserved His which is expected to be an active site residue.</text>
</comment>
<dbReference type="EC" id="6.3.5.2"/>
<dbReference type="EMBL" id="BA000004">
    <property type="protein sequence ID" value="BAB04326.1"/>
    <property type="molecule type" value="Genomic_DNA"/>
</dbReference>
<dbReference type="PIR" id="G83725">
    <property type="entry name" value="G83725"/>
</dbReference>
<dbReference type="RefSeq" id="WP_010896784.1">
    <property type="nucleotide sequence ID" value="NC_002570.2"/>
</dbReference>
<dbReference type="SMR" id="Q9KF78"/>
<dbReference type="STRING" id="272558.gene:10726476"/>
<dbReference type="MEROPS" id="C26.957"/>
<dbReference type="KEGG" id="bha:BH0607"/>
<dbReference type="eggNOG" id="COG0518">
    <property type="taxonomic scope" value="Bacteria"/>
</dbReference>
<dbReference type="eggNOG" id="COG0519">
    <property type="taxonomic scope" value="Bacteria"/>
</dbReference>
<dbReference type="HOGENOM" id="CLU_014340_0_5_9"/>
<dbReference type="OrthoDB" id="9802219at2"/>
<dbReference type="UniPathway" id="UPA00189">
    <property type="reaction ID" value="UER00296"/>
</dbReference>
<dbReference type="Proteomes" id="UP000001258">
    <property type="component" value="Chromosome"/>
</dbReference>
<dbReference type="GO" id="GO:0005829">
    <property type="term" value="C:cytosol"/>
    <property type="evidence" value="ECO:0007669"/>
    <property type="project" value="TreeGrafter"/>
</dbReference>
<dbReference type="GO" id="GO:0005524">
    <property type="term" value="F:ATP binding"/>
    <property type="evidence" value="ECO:0007669"/>
    <property type="project" value="UniProtKB-UniRule"/>
</dbReference>
<dbReference type="GO" id="GO:0003921">
    <property type="term" value="F:GMP synthase activity"/>
    <property type="evidence" value="ECO:0007669"/>
    <property type="project" value="InterPro"/>
</dbReference>
<dbReference type="CDD" id="cd01742">
    <property type="entry name" value="GATase1_GMP_Synthase"/>
    <property type="match status" value="1"/>
</dbReference>
<dbReference type="CDD" id="cd01997">
    <property type="entry name" value="GMP_synthase_C"/>
    <property type="match status" value="1"/>
</dbReference>
<dbReference type="FunFam" id="3.30.300.10:FF:000002">
    <property type="entry name" value="GMP synthase [glutamine-hydrolyzing]"/>
    <property type="match status" value="1"/>
</dbReference>
<dbReference type="FunFam" id="3.40.50.620:FF:000001">
    <property type="entry name" value="GMP synthase [glutamine-hydrolyzing]"/>
    <property type="match status" value="1"/>
</dbReference>
<dbReference type="FunFam" id="3.40.50.880:FF:000001">
    <property type="entry name" value="GMP synthase [glutamine-hydrolyzing]"/>
    <property type="match status" value="1"/>
</dbReference>
<dbReference type="Gene3D" id="3.30.300.10">
    <property type="match status" value="1"/>
</dbReference>
<dbReference type="Gene3D" id="3.40.50.880">
    <property type="match status" value="1"/>
</dbReference>
<dbReference type="Gene3D" id="3.40.50.620">
    <property type="entry name" value="HUPs"/>
    <property type="match status" value="1"/>
</dbReference>
<dbReference type="HAMAP" id="MF_00344">
    <property type="entry name" value="GMP_synthase"/>
    <property type="match status" value="1"/>
</dbReference>
<dbReference type="InterPro" id="IPR029062">
    <property type="entry name" value="Class_I_gatase-like"/>
</dbReference>
<dbReference type="InterPro" id="IPR017926">
    <property type="entry name" value="GATASE"/>
</dbReference>
<dbReference type="InterPro" id="IPR001674">
    <property type="entry name" value="GMP_synth_C"/>
</dbReference>
<dbReference type="InterPro" id="IPR004739">
    <property type="entry name" value="GMP_synth_GATase"/>
</dbReference>
<dbReference type="InterPro" id="IPR022955">
    <property type="entry name" value="GMP_synthase"/>
</dbReference>
<dbReference type="InterPro" id="IPR025777">
    <property type="entry name" value="GMPS_ATP_PPase_dom"/>
</dbReference>
<dbReference type="InterPro" id="IPR022310">
    <property type="entry name" value="NAD/GMP_synthase"/>
</dbReference>
<dbReference type="InterPro" id="IPR014729">
    <property type="entry name" value="Rossmann-like_a/b/a_fold"/>
</dbReference>
<dbReference type="NCBIfam" id="TIGR00884">
    <property type="entry name" value="guaA_Cterm"/>
    <property type="match status" value="1"/>
</dbReference>
<dbReference type="NCBIfam" id="TIGR00888">
    <property type="entry name" value="guaA_Nterm"/>
    <property type="match status" value="1"/>
</dbReference>
<dbReference type="NCBIfam" id="NF000848">
    <property type="entry name" value="PRK00074.1"/>
    <property type="match status" value="1"/>
</dbReference>
<dbReference type="PANTHER" id="PTHR11922:SF2">
    <property type="entry name" value="GMP SYNTHASE [GLUTAMINE-HYDROLYZING]"/>
    <property type="match status" value="1"/>
</dbReference>
<dbReference type="PANTHER" id="PTHR11922">
    <property type="entry name" value="GMP SYNTHASE-RELATED"/>
    <property type="match status" value="1"/>
</dbReference>
<dbReference type="Pfam" id="PF00117">
    <property type="entry name" value="GATase"/>
    <property type="match status" value="1"/>
</dbReference>
<dbReference type="Pfam" id="PF00958">
    <property type="entry name" value="GMP_synt_C"/>
    <property type="match status" value="1"/>
</dbReference>
<dbReference type="Pfam" id="PF02540">
    <property type="entry name" value="NAD_synthase"/>
    <property type="match status" value="1"/>
</dbReference>
<dbReference type="PRINTS" id="PR00099">
    <property type="entry name" value="CPSGATASE"/>
</dbReference>
<dbReference type="PRINTS" id="PR00096">
    <property type="entry name" value="GATASE"/>
</dbReference>
<dbReference type="SUPFAM" id="SSF52402">
    <property type="entry name" value="Adenine nucleotide alpha hydrolases-like"/>
    <property type="match status" value="1"/>
</dbReference>
<dbReference type="SUPFAM" id="SSF52317">
    <property type="entry name" value="Class I glutamine amidotransferase-like"/>
    <property type="match status" value="1"/>
</dbReference>
<dbReference type="SUPFAM" id="SSF54810">
    <property type="entry name" value="GMP synthetase C-terminal dimerisation domain"/>
    <property type="match status" value="1"/>
</dbReference>
<dbReference type="PROSITE" id="PS51273">
    <property type="entry name" value="GATASE_TYPE_1"/>
    <property type="match status" value="1"/>
</dbReference>
<dbReference type="PROSITE" id="PS51553">
    <property type="entry name" value="GMPS_ATP_PPASE"/>
    <property type="match status" value="1"/>
</dbReference>
<proteinExistence type="inferred from homology"/>
<gene>
    <name type="primary">guaA</name>
    <name type="ordered locus">BH0607</name>
</gene>
<organism>
    <name type="scientific">Halalkalibacterium halodurans (strain ATCC BAA-125 / DSM 18197 / FERM 7344 / JCM 9153 / C-125)</name>
    <name type="common">Bacillus halodurans</name>
    <dbReference type="NCBI Taxonomy" id="272558"/>
    <lineage>
        <taxon>Bacteria</taxon>
        <taxon>Bacillati</taxon>
        <taxon>Bacillota</taxon>
        <taxon>Bacilli</taxon>
        <taxon>Bacillales</taxon>
        <taxon>Bacillaceae</taxon>
        <taxon>Halalkalibacterium (ex Joshi et al. 2022)</taxon>
    </lineage>
</organism>
<evidence type="ECO:0000250" key="1"/>
<evidence type="ECO:0000305" key="2"/>
<protein>
    <recommendedName>
        <fullName>Putative GMP synthase [glutamine-hydrolyzing]</fullName>
        <ecNumber>6.3.5.2</ecNumber>
    </recommendedName>
    <alternativeName>
        <fullName>GMP synthetase</fullName>
    </alternativeName>
    <alternativeName>
        <fullName>Glutamine amidotransferase</fullName>
    </alternativeName>
</protein>